<name>PYRG_BACCQ</name>
<feature type="chain" id="PRO_1000164928" description="CTP synthase">
    <location>
        <begin position="1"/>
        <end position="535"/>
    </location>
</feature>
<feature type="domain" description="Glutamine amidotransferase type-1" evidence="1">
    <location>
        <begin position="292"/>
        <end position="534"/>
    </location>
</feature>
<feature type="region of interest" description="Amidoligase domain" evidence="1">
    <location>
        <begin position="1"/>
        <end position="267"/>
    </location>
</feature>
<feature type="active site" description="Nucleophile; for glutamine hydrolysis" evidence="1">
    <location>
        <position position="381"/>
    </location>
</feature>
<feature type="active site" evidence="1">
    <location>
        <position position="507"/>
    </location>
</feature>
<feature type="active site" evidence="1">
    <location>
        <position position="509"/>
    </location>
</feature>
<feature type="binding site" evidence="1">
    <location>
        <position position="13"/>
    </location>
    <ligand>
        <name>CTP</name>
        <dbReference type="ChEBI" id="CHEBI:37563"/>
        <note>allosteric inhibitor</note>
    </ligand>
</feature>
<feature type="binding site" evidence="1">
    <location>
        <position position="13"/>
    </location>
    <ligand>
        <name>UTP</name>
        <dbReference type="ChEBI" id="CHEBI:46398"/>
    </ligand>
</feature>
<feature type="binding site" evidence="1">
    <location>
        <begin position="14"/>
        <end position="19"/>
    </location>
    <ligand>
        <name>ATP</name>
        <dbReference type="ChEBI" id="CHEBI:30616"/>
    </ligand>
</feature>
<feature type="binding site" evidence="1">
    <location>
        <position position="54"/>
    </location>
    <ligand>
        <name>L-glutamine</name>
        <dbReference type="ChEBI" id="CHEBI:58359"/>
    </ligand>
</feature>
<feature type="binding site" evidence="1">
    <location>
        <position position="71"/>
    </location>
    <ligand>
        <name>ATP</name>
        <dbReference type="ChEBI" id="CHEBI:30616"/>
    </ligand>
</feature>
<feature type="binding site" evidence="1">
    <location>
        <position position="71"/>
    </location>
    <ligand>
        <name>Mg(2+)</name>
        <dbReference type="ChEBI" id="CHEBI:18420"/>
    </ligand>
</feature>
<feature type="binding site" evidence="1">
    <location>
        <position position="141"/>
    </location>
    <ligand>
        <name>Mg(2+)</name>
        <dbReference type="ChEBI" id="CHEBI:18420"/>
    </ligand>
</feature>
<feature type="binding site" evidence="1">
    <location>
        <begin position="148"/>
        <end position="150"/>
    </location>
    <ligand>
        <name>CTP</name>
        <dbReference type="ChEBI" id="CHEBI:37563"/>
        <note>allosteric inhibitor</note>
    </ligand>
</feature>
<feature type="binding site" evidence="1">
    <location>
        <begin position="188"/>
        <end position="193"/>
    </location>
    <ligand>
        <name>CTP</name>
        <dbReference type="ChEBI" id="CHEBI:37563"/>
        <note>allosteric inhibitor</note>
    </ligand>
</feature>
<feature type="binding site" evidence="1">
    <location>
        <begin position="188"/>
        <end position="193"/>
    </location>
    <ligand>
        <name>UTP</name>
        <dbReference type="ChEBI" id="CHEBI:46398"/>
    </ligand>
</feature>
<feature type="binding site" evidence="1">
    <location>
        <position position="224"/>
    </location>
    <ligand>
        <name>CTP</name>
        <dbReference type="ChEBI" id="CHEBI:37563"/>
        <note>allosteric inhibitor</note>
    </ligand>
</feature>
<feature type="binding site" evidence="1">
    <location>
        <position position="224"/>
    </location>
    <ligand>
        <name>UTP</name>
        <dbReference type="ChEBI" id="CHEBI:46398"/>
    </ligand>
</feature>
<feature type="binding site" evidence="1">
    <location>
        <begin position="240"/>
        <end position="242"/>
    </location>
    <ligand>
        <name>ATP</name>
        <dbReference type="ChEBI" id="CHEBI:30616"/>
    </ligand>
</feature>
<feature type="binding site" evidence="1">
    <location>
        <position position="354"/>
    </location>
    <ligand>
        <name>L-glutamine</name>
        <dbReference type="ChEBI" id="CHEBI:58359"/>
    </ligand>
</feature>
<feature type="binding site" evidence="1">
    <location>
        <begin position="382"/>
        <end position="385"/>
    </location>
    <ligand>
        <name>L-glutamine</name>
        <dbReference type="ChEBI" id="CHEBI:58359"/>
    </ligand>
</feature>
<feature type="binding site" evidence="1">
    <location>
        <position position="405"/>
    </location>
    <ligand>
        <name>L-glutamine</name>
        <dbReference type="ChEBI" id="CHEBI:58359"/>
    </ligand>
</feature>
<feature type="binding site" evidence="1">
    <location>
        <position position="462"/>
    </location>
    <ligand>
        <name>L-glutamine</name>
        <dbReference type="ChEBI" id="CHEBI:58359"/>
    </ligand>
</feature>
<comment type="function">
    <text evidence="1">Catalyzes the ATP-dependent amination of UTP to CTP with either L-glutamine or ammonia as the source of nitrogen. Regulates intracellular CTP levels through interactions with the four ribonucleotide triphosphates.</text>
</comment>
<comment type="catalytic activity">
    <reaction evidence="1">
        <text>UTP + L-glutamine + ATP + H2O = CTP + L-glutamate + ADP + phosphate + 2 H(+)</text>
        <dbReference type="Rhea" id="RHEA:26426"/>
        <dbReference type="ChEBI" id="CHEBI:15377"/>
        <dbReference type="ChEBI" id="CHEBI:15378"/>
        <dbReference type="ChEBI" id="CHEBI:29985"/>
        <dbReference type="ChEBI" id="CHEBI:30616"/>
        <dbReference type="ChEBI" id="CHEBI:37563"/>
        <dbReference type="ChEBI" id="CHEBI:43474"/>
        <dbReference type="ChEBI" id="CHEBI:46398"/>
        <dbReference type="ChEBI" id="CHEBI:58359"/>
        <dbReference type="ChEBI" id="CHEBI:456216"/>
        <dbReference type="EC" id="6.3.4.2"/>
    </reaction>
</comment>
<comment type="catalytic activity">
    <reaction evidence="1">
        <text>L-glutamine + H2O = L-glutamate + NH4(+)</text>
        <dbReference type="Rhea" id="RHEA:15889"/>
        <dbReference type="ChEBI" id="CHEBI:15377"/>
        <dbReference type="ChEBI" id="CHEBI:28938"/>
        <dbReference type="ChEBI" id="CHEBI:29985"/>
        <dbReference type="ChEBI" id="CHEBI:58359"/>
    </reaction>
</comment>
<comment type="catalytic activity">
    <reaction evidence="1">
        <text>UTP + NH4(+) + ATP = CTP + ADP + phosphate + 2 H(+)</text>
        <dbReference type="Rhea" id="RHEA:16597"/>
        <dbReference type="ChEBI" id="CHEBI:15378"/>
        <dbReference type="ChEBI" id="CHEBI:28938"/>
        <dbReference type="ChEBI" id="CHEBI:30616"/>
        <dbReference type="ChEBI" id="CHEBI:37563"/>
        <dbReference type="ChEBI" id="CHEBI:43474"/>
        <dbReference type="ChEBI" id="CHEBI:46398"/>
        <dbReference type="ChEBI" id="CHEBI:456216"/>
    </reaction>
</comment>
<comment type="activity regulation">
    <text evidence="1">Allosterically activated by GTP, when glutamine is the substrate; GTP has no effect on the reaction when ammonia is the substrate. The allosteric effector GTP functions by stabilizing the protein conformation that binds the tetrahedral intermediate(s) formed during glutamine hydrolysis. Inhibited by the product CTP, via allosteric rather than competitive inhibition.</text>
</comment>
<comment type="pathway">
    <text evidence="1">Pyrimidine metabolism; CTP biosynthesis via de novo pathway; CTP from UDP: step 2/2.</text>
</comment>
<comment type="subunit">
    <text evidence="1">Homotetramer.</text>
</comment>
<comment type="miscellaneous">
    <text evidence="1">CTPSs have evolved a hybrid strategy for distinguishing between UTP and CTP. The overlapping regions of the product feedback inhibitory and substrate sites recognize a common feature in both compounds, the triphosphate moiety. To differentiate isosteric substrate and product pyrimidine rings, an additional pocket far from the expected kinase/ligase catalytic site, specifically recognizes the cytosine and ribose portions of the product inhibitor.</text>
</comment>
<comment type="similarity">
    <text evidence="1">Belongs to the CTP synthase family.</text>
</comment>
<gene>
    <name evidence="1" type="primary">pyrG</name>
    <name type="ordered locus">BCQ_5179</name>
</gene>
<dbReference type="EC" id="6.3.4.2" evidence="1"/>
<dbReference type="EMBL" id="CP000227">
    <property type="protein sequence ID" value="ACM15579.1"/>
    <property type="molecule type" value="Genomic_DNA"/>
</dbReference>
<dbReference type="SMR" id="B9IRX1"/>
<dbReference type="MEROPS" id="C26.964"/>
<dbReference type="KEGG" id="bcq:BCQ_5179"/>
<dbReference type="HOGENOM" id="CLU_011675_5_0_9"/>
<dbReference type="UniPathway" id="UPA00159">
    <property type="reaction ID" value="UER00277"/>
</dbReference>
<dbReference type="Proteomes" id="UP000000441">
    <property type="component" value="Chromosome"/>
</dbReference>
<dbReference type="GO" id="GO:0005829">
    <property type="term" value="C:cytosol"/>
    <property type="evidence" value="ECO:0007669"/>
    <property type="project" value="TreeGrafter"/>
</dbReference>
<dbReference type="GO" id="GO:0005524">
    <property type="term" value="F:ATP binding"/>
    <property type="evidence" value="ECO:0007669"/>
    <property type="project" value="UniProtKB-KW"/>
</dbReference>
<dbReference type="GO" id="GO:0003883">
    <property type="term" value="F:CTP synthase activity"/>
    <property type="evidence" value="ECO:0007669"/>
    <property type="project" value="UniProtKB-UniRule"/>
</dbReference>
<dbReference type="GO" id="GO:0004359">
    <property type="term" value="F:glutaminase activity"/>
    <property type="evidence" value="ECO:0007669"/>
    <property type="project" value="RHEA"/>
</dbReference>
<dbReference type="GO" id="GO:0042802">
    <property type="term" value="F:identical protein binding"/>
    <property type="evidence" value="ECO:0007669"/>
    <property type="project" value="TreeGrafter"/>
</dbReference>
<dbReference type="GO" id="GO:0046872">
    <property type="term" value="F:metal ion binding"/>
    <property type="evidence" value="ECO:0007669"/>
    <property type="project" value="UniProtKB-KW"/>
</dbReference>
<dbReference type="GO" id="GO:0044210">
    <property type="term" value="P:'de novo' CTP biosynthetic process"/>
    <property type="evidence" value="ECO:0007669"/>
    <property type="project" value="UniProtKB-UniRule"/>
</dbReference>
<dbReference type="GO" id="GO:0019856">
    <property type="term" value="P:pyrimidine nucleobase biosynthetic process"/>
    <property type="evidence" value="ECO:0007669"/>
    <property type="project" value="TreeGrafter"/>
</dbReference>
<dbReference type="CDD" id="cd03113">
    <property type="entry name" value="CTPS_N"/>
    <property type="match status" value="1"/>
</dbReference>
<dbReference type="CDD" id="cd01746">
    <property type="entry name" value="GATase1_CTP_Synthase"/>
    <property type="match status" value="1"/>
</dbReference>
<dbReference type="FunFam" id="3.40.50.300:FF:000009">
    <property type="entry name" value="CTP synthase"/>
    <property type="match status" value="1"/>
</dbReference>
<dbReference type="FunFam" id="3.40.50.880:FF:000002">
    <property type="entry name" value="CTP synthase"/>
    <property type="match status" value="1"/>
</dbReference>
<dbReference type="Gene3D" id="3.40.50.880">
    <property type="match status" value="1"/>
</dbReference>
<dbReference type="Gene3D" id="3.40.50.300">
    <property type="entry name" value="P-loop containing nucleotide triphosphate hydrolases"/>
    <property type="match status" value="1"/>
</dbReference>
<dbReference type="HAMAP" id="MF_01227">
    <property type="entry name" value="PyrG"/>
    <property type="match status" value="1"/>
</dbReference>
<dbReference type="InterPro" id="IPR029062">
    <property type="entry name" value="Class_I_gatase-like"/>
</dbReference>
<dbReference type="InterPro" id="IPR004468">
    <property type="entry name" value="CTP_synthase"/>
</dbReference>
<dbReference type="InterPro" id="IPR017456">
    <property type="entry name" value="CTP_synthase_N"/>
</dbReference>
<dbReference type="InterPro" id="IPR017926">
    <property type="entry name" value="GATASE"/>
</dbReference>
<dbReference type="InterPro" id="IPR033828">
    <property type="entry name" value="GATase1_CTP_Synthase"/>
</dbReference>
<dbReference type="InterPro" id="IPR027417">
    <property type="entry name" value="P-loop_NTPase"/>
</dbReference>
<dbReference type="NCBIfam" id="NF003792">
    <property type="entry name" value="PRK05380.1"/>
    <property type="match status" value="1"/>
</dbReference>
<dbReference type="NCBIfam" id="TIGR00337">
    <property type="entry name" value="PyrG"/>
    <property type="match status" value="1"/>
</dbReference>
<dbReference type="PANTHER" id="PTHR11550">
    <property type="entry name" value="CTP SYNTHASE"/>
    <property type="match status" value="1"/>
</dbReference>
<dbReference type="PANTHER" id="PTHR11550:SF0">
    <property type="entry name" value="CTP SYNTHASE-RELATED"/>
    <property type="match status" value="1"/>
</dbReference>
<dbReference type="Pfam" id="PF06418">
    <property type="entry name" value="CTP_synth_N"/>
    <property type="match status" value="1"/>
</dbReference>
<dbReference type="Pfam" id="PF00117">
    <property type="entry name" value="GATase"/>
    <property type="match status" value="1"/>
</dbReference>
<dbReference type="SUPFAM" id="SSF52317">
    <property type="entry name" value="Class I glutamine amidotransferase-like"/>
    <property type="match status" value="1"/>
</dbReference>
<dbReference type="SUPFAM" id="SSF52540">
    <property type="entry name" value="P-loop containing nucleoside triphosphate hydrolases"/>
    <property type="match status" value="1"/>
</dbReference>
<dbReference type="PROSITE" id="PS51273">
    <property type="entry name" value="GATASE_TYPE_1"/>
    <property type="match status" value="1"/>
</dbReference>
<proteinExistence type="inferred from homology"/>
<organism>
    <name type="scientific">Bacillus cereus (strain Q1)</name>
    <dbReference type="NCBI Taxonomy" id="361100"/>
    <lineage>
        <taxon>Bacteria</taxon>
        <taxon>Bacillati</taxon>
        <taxon>Bacillota</taxon>
        <taxon>Bacilli</taxon>
        <taxon>Bacillales</taxon>
        <taxon>Bacillaceae</taxon>
        <taxon>Bacillus</taxon>
        <taxon>Bacillus cereus group</taxon>
    </lineage>
</organism>
<sequence>MTKYIFVTGGVVSSLGKGITAASLGRLLKNRGLNVTIQKFDPYINVDPGTMSPYQHGEVFVTDDGAETDLDLGHYERFIDINLNKYSNVTTGKIYSSVLQKERRGEYLGGTVQVIPHITNEIKERVYRSGRETNADVVITEIGGTVGDIESLPFLEAIRQIKSDIGRDNVMYIHCTLIPYLKAAGEMKTKPTQHSVKELRSLGIQPNIIVVRTEMPVSQDMKDKLALFCDIDTKAVIEARDADTLYAVPLSLQEQNMDQIVCDHLKLDNPAADMTEWTALVEKVRNLSKKTKIALVGKYVELQDAYISVVEALRHAGYSFDTDVEVKWVNAEHVTAENVQELVGDTDGILVPGGFGDRGVEGKIVAIQYARENKVPFLGICLGMQLASIEFARNVLGLEGANSSEINPDTPYAIIDLLPEQKDVEDLGGTLRLGLYPCKLAEETNAYNAYNEPVVYERHRHRYEFNNQFRPDMEKAGFVFSGTSPDGRLVEIIELKDHPWFVAAQFHPELVSRPNRPQPLFHDFVRASITNKESK</sequence>
<keyword id="KW-0067">ATP-binding</keyword>
<keyword id="KW-0315">Glutamine amidotransferase</keyword>
<keyword id="KW-0436">Ligase</keyword>
<keyword id="KW-0460">Magnesium</keyword>
<keyword id="KW-0479">Metal-binding</keyword>
<keyword id="KW-0547">Nucleotide-binding</keyword>
<keyword id="KW-0665">Pyrimidine biosynthesis</keyword>
<reference key="1">
    <citation type="journal article" date="2009" name="J. Bacteriol.">
        <title>Complete genome sequence of the extremophilic Bacillus cereus strain Q1 with industrial applications.</title>
        <authorList>
            <person name="Xiong Z."/>
            <person name="Jiang Y."/>
            <person name="Qi D."/>
            <person name="Lu H."/>
            <person name="Yang F."/>
            <person name="Yang J."/>
            <person name="Chen L."/>
            <person name="Sun L."/>
            <person name="Xu X."/>
            <person name="Xue Y."/>
            <person name="Zhu Y."/>
            <person name="Jin Q."/>
        </authorList>
    </citation>
    <scope>NUCLEOTIDE SEQUENCE [LARGE SCALE GENOMIC DNA]</scope>
    <source>
        <strain>Q1</strain>
    </source>
</reference>
<evidence type="ECO:0000255" key="1">
    <source>
        <dbReference type="HAMAP-Rule" id="MF_01227"/>
    </source>
</evidence>
<protein>
    <recommendedName>
        <fullName evidence="1">CTP synthase</fullName>
        <ecNumber evidence="1">6.3.4.2</ecNumber>
    </recommendedName>
    <alternativeName>
        <fullName evidence="1">Cytidine 5'-triphosphate synthase</fullName>
    </alternativeName>
    <alternativeName>
        <fullName evidence="1">Cytidine triphosphate synthetase</fullName>
        <shortName evidence="1">CTP synthetase</shortName>
        <shortName evidence="1">CTPS</shortName>
    </alternativeName>
    <alternativeName>
        <fullName evidence="1">UTP--ammonia ligase</fullName>
    </alternativeName>
</protein>
<accession>B9IRX1</accession>